<comment type="similarity">
    <text evidence="1">Belongs to the universal ribosomal protein uL29 family.</text>
</comment>
<feature type="chain" id="PRO_1000193997" description="Large ribosomal subunit protein uL29">
    <location>
        <begin position="1"/>
        <end position="66"/>
    </location>
</feature>
<reference key="1">
    <citation type="submission" date="2004-12" db="EMBL/GenBank/DDBJ databases">
        <title>The genome sequence of Borrelia hermsii and Borrelia turicatae: comparative analysis of two agents of endemic N. America relapsing fever.</title>
        <authorList>
            <person name="Porcella S.F."/>
            <person name="Raffel S.J."/>
            <person name="Schrumpf M.E."/>
            <person name="Montgomery B."/>
            <person name="Smith T."/>
            <person name="Schwan T.G."/>
        </authorList>
    </citation>
    <scope>NUCLEOTIDE SEQUENCE [LARGE SCALE GENOMIC DNA]</scope>
    <source>
        <strain>91E135</strain>
    </source>
</reference>
<sequence>MLKKFRDLTLEDIKAKRLSLKKEYMDLRFKAVVGHVENPLKKRELRRDIARLNTIVHEYEIGIRKV</sequence>
<proteinExistence type="inferred from homology"/>
<organism>
    <name type="scientific">Borrelia turicatae (strain 91E135)</name>
    <dbReference type="NCBI Taxonomy" id="314724"/>
    <lineage>
        <taxon>Bacteria</taxon>
        <taxon>Pseudomonadati</taxon>
        <taxon>Spirochaetota</taxon>
        <taxon>Spirochaetia</taxon>
        <taxon>Spirochaetales</taxon>
        <taxon>Borreliaceae</taxon>
        <taxon>Borrelia</taxon>
    </lineage>
</organism>
<name>RL29_BORT9</name>
<gene>
    <name evidence="1" type="primary">rpmC</name>
    <name type="ordered locus">BT0486</name>
</gene>
<protein>
    <recommendedName>
        <fullName evidence="1">Large ribosomal subunit protein uL29</fullName>
    </recommendedName>
    <alternativeName>
        <fullName evidence="2">50S ribosomal protein L29</fullName>
    </alternativeName>
</protein>
<accession>A1QZS2</accession>
<keyword id="KW-1185">Reference proteome</keyword>
<keyword id="KW-0687">Ribonucleoprotein</keyword>
<keyword id="KW-0689">Ribosomal protein</keyword>
<dbReference type="EMBL" id="CP000049">
    <property type="protein sequence ID" value="AAX17814.1"/>
    <property type="molecule type" value="Genomic_DNA"/>
</dbReference>
<dbReference type="RefSeq" id="WP_011772433.1">
    <property type="nucleotide sequence ID" value="NC_008710.1"/>
</dbReference>
<dbReference type="SMR" id="A1QZS2"/>
<dbReference type="KEGG" id="btu:BT0486"/>
<dbReference type="eggNOG" id="COG0255">
    <property type="taxonomic scope" value="Bacteria"/>
</dbReference>
<dbReference type="HOGENOM" id="CLU_158491_5_0_12"/>
<dbReference type="Proteomes" id="UP000001205">
    <property type="component" value="Chromosome"/>
</dbReference>
<dbReference type="GO" id="GO:1990904">
    <property type="term" value="C:ribonucleoprotein complex"/>
    <property type="evidence" value="ECO:0007669"/>
    <property type="project" value="UniProtKB-KW"/>
</dbReference>
<dbReference type="GO" id="GO:0005840">
    <property type="term" value="C:ribosome"/>
    <property type="evidence" value="ECO:0007669"/>
    <property type="project" value="UniProtKB-KW"/>
</dbReference>
<dbReference type="GO" id="GO:0003735">
    <property type="term" value="F:structural constituent of ribosome"/>
    <property type="evidence" value="ECO:0007669"/>
    <property type="project" value="InterPro"/>
</dbReference>
<dbReference type="GO" id="GO:0006412">
    <property type="term" value="P:translation"/>
    <property type="evidence" value="ECO:0007669"/>
    <property type="project" value="UniProtKB-UniRule"/>
</dbReference>
<dbReference type="CDD" id="cd00427">
    <property type="entry name" value="Ribosomal_L29_HIP"/>
    <property type="match status" value="1"/>
</dbReference>
<dbReference type="Gene3D" id="1.10.287.310">
    <property type="match status" value="1"/>
</dbReference>
<dbReference type="HAMAP" id="MF_00374">
    <property type="entry name" value="Ribosomal_uL29"/>
    <property type="match status" value="1"/>
</dbReference>
<dbReference type="InterPro" id="IPR001854">
    <property type="entry name" value="Ribosomal_uL29"/>
</dbReference>
<dbReference type="InterPro" id="IPR036049">
    <property type="entry name" value="Ribosomal_uL29_sf"/>
</dbReference>
<dbReference type="NCBIfam" id="TIGR00012">
    <property type="entry name" value="L29"/>
    <property type="match status" value="1"/>
</dbReference>
<dbReference type="Pfam" id="PF00831">
    <property type="entry name" value="Ribosomal_L29"/>
    <property type="match status" value="1"/>
</dbReference>
<dbReference type="SUPFAM" id="SSF46561">
    <property type="entry name" value="Ribosomal protein L29 (L29p)"/>
    <property type="match status" value="1"/>
</dbReference>
<evidence type="ECO:0000255" key="1">
    <source>
        <dbReference type="HAMAP-Rule" id="MF_00374"/>
    </source>
</evidence>
<evidence type="ECO:0000305" key="2"/>